<dbReference type="EC" id="2.8.2.-" evidence="5"/>
<dbReference type="EMBL" id="BK010672">
    <property type="protein sequence ID" value="DAC76722.1"/>
    <property type="molecule type" value="Genomic_DNA"/>
</dbReference>
<dbReference type="GO" id="GO:0016740">
    <property type="term" value="F:transferase activity"/>
    <property type="evidence" value="ECO:0007669"/>
    <property type="project" value="UniProtKB-KW"/>
</dbReference>
<dbReference type="Gene3D" id="3.40.50.300">
    <property type="entry name" value="P-loop containing nucleotide triphosphate hydrolases"/>
    <property type="match status" value="1"/>
</dbReference>
<dbReference type="InterPro" id="IPR027417">
    <property type="entry name" value="P-loop_NTPase"/>
</dbReference>
<dbReference type="InterPro" id="IPR053226">
    <property type="entry name" value="Pyrrolopyrazine_biosynth_F"/>
</dbReference>
<dbReference type="PANTHER" id="PTHR48419">
    <property type="entry name" value="SULFOTRANSFERASE DOMAIN-CONTAINING PROTEIN"/>
    <property type="match status" value="1"/>
</dbReference>
<dbReference type="PANTHER" id="PTHR48419:SF1">
    <property type="entry name" value="SULFOTRANSFERASE DOMAIN-CONTAINING PROTEIN"/>
    <property type="match status" value="1"/>
</dbReference>
<dbReference type="SUPFAM" id="SSF52540">
    <property type="entry name" value="P-loop containing nucleoside triphosphate hydrolases"/>
    <property type="match status" value="1"/>
</dbReference>
<comment type="function">
    <text evidence="1 2 3">Sulfotransferase; part of the gene cluster that mediates the biosynthesis of pyrrolopyrazines, secondary metabolites showing insecticidal activity (PubMed:30452111, PubMed:38578094). The role of ppzF within the pathway has still to be determined (PubMed:38578094). The single multifunctional NRPS ppzA is sufficient to produce peramine via condensation of 1-pyrroline-5-carboxylate and arginine, N-methylation of the alpha-amino group of arginine and reduction of the thioester and the cyclization to form an iminium ion resulting in release from the peptide synthetase. Deprotonation of this intermediate and oxidation of the pyrroline ring would give rise to peramine (By similarity). In Epichloe species that produce only peramine, the peramine synthetase gene is not localized in a gene cluster, in contrast to Metarhizium species that contain additional pyrrolopyrazine biosynthesis genes. The 2-oxoglutarate-Fe(II) type oxidoreductase ppzC hydroxylates peramine to yield the newly identified compound 8-hydroxyperamine whereas ppzD converts L-proline into trans-4-hydroxy-L-proline, a precursor of peramine biosynthesis (PubMed:38578094).</text>
</comment>
<comment type="pathway">
    <text evidence="5">Secondary metabolite biosynthesis.</text>
</comment>
<proteinExistence type="inferred from homology"/>
<accession>A0A455ZLR3</accession>
<gene>
    <name evidence="4" type="primary">ppzF</name>
</gene>
<reference key="1">
    <citation type="journal article" date="2019" name="Environ. Microbiol.">
        <title>Orthologous peramine and pyrrolopyrazine-producing biosynthetic gene clusters in Metarhizium rileyi, Metarhizium majus and Cladonia grayi.</title>
        <authorList>
            <person name="Berry D."/>
            <person name="Mace W."/>
            <person name="Rehner S.A."/>
            <person name="Grage K."/>
            <person name="Dijkwel P.P."/>
            <person name="Young C.A."/>
            <person name="Scott B."/>
        </authorList>
    </citation>
    <scope>NUCLEOTIDE SEQUENCE [GENOMIC DNA]</scope>
    <scope>FUNCTION</scope>
    <scope>PATHWAY</scope>
    <source>
        <strain>ARSEF 297</strain>
    </source>
</reference>
<reference key="2">
    <citation type="journal article" date="2024" name="J. Am. Chem. Soc.">
        <title>Two Iron(II), alpha-Ketoglutarate-Dependent Enzymes Encoded by the PPZ Gene Cluster of Metarhizium majus Enable Production of 8-Hydroxyperamine.</title>
        <authorList>
            <person name="Rothchild K.W."/>
            <person name="Hagar M."/>
            <person name="Berry D."/>
            <person name="Ryan K.S."/>
        </authorList>
    </citation>
    <scope>FUNCTION</scope>
    <scope>PATHWAY</scope>
</reference>
<evidence type="ECO:0000250" key="1">
    <source>
        <dbReference type="UniProtKB" id="Q4H424"/>
    </source>
</evidence>
<evidence type="ECO:0000269" key="2">
    <source>
    </source>
</evidence>
<evidence type="ECO:0000269" key="3">
    <source>
    </source>
</evidence>
<evidence type="ECO:0000303" key="4">
    <source>
    </source>
</evidence>
<evidence type="ECO:0000305" key="5">
    <source>
    </source>
</evidence>
<keyword id="KW-0808">Transferase</keyword>
<name>PPZF_METMF</name>
<sequence>MSANTGKPARHYLISYPRTASNLLLKILALDSQPNFSSGGFDGGYFFMPADDILTDPRIRVRARSISDWTADERAQLKETFQACFEAQQRWLESAESQGQSVFVKEHTVFFADPTARSCLQFGPSATSEPAWTVEYAGGSTHSKLNITVLPDEFLLTWLPTFLIRHPALAFPSLYRTVIKREGKESAAADNFASLLTTVEWSRSLYDFYVQNRESLPCSPDQRLEWPIVLDADDIIAHPATVTLYCDKIGMDPRQLCFNWDQLKSEELSKIEPNQLAMRMSLYQSTGIDTSKSSRGINVDDEATKWRSEFGIAVADHIEKLVRGAMADYEYLRARRLRAD</sequence>
<organism>
    <name type="scientific">Metarhizium majus (strain ARSEF 297)</name>
    <dbReference type="NCBI Taxonomy" id="1276143"/>
    <lineage>
        <taxon>Eukaryota</taxon>
        <taxon>Fungi</taxon>
        <taxon>Dikarya</taxon>
        <taxon>Ascomycota</taxon>
        <taxon>Pezizomycotina</taxon>
        <taxon>Sordariomycetes</taxon>
        <taxon>Hypocreomycetidae</taxon>
        <taxon>Hypocreales</taxon>
        <taxon>Clavicipitaceae</taxon>
        <taxon>Metarhizium</taxon>
        <taxon>Metarhizium majus</taxon>
    </lineage>
</organism>
<feature type="chain" id="PRO_0000461616" description="Sulfotransferase ppzF">
    <location>
        <begin position="1"/>
        <end position="340"/>
    </location>
</feature>
<protein>
    <recommendedName>
        <fullName evidence="4">Sulfotransferase ppzF</fullName>
        <ecNumber evidence="5">2.8.2.-</ecNumber>
    </recommendedName>
    <alternativeName>
        <fullName evidence="4">Pyrrolopyrazine biosynthesis cluster protein F</fullName>
    </alternativeName>
</protein>